<gene>
    <name evidence="5" type="primary">csoS3</name>
    <name type="ordered locus">Tcr_0841</name>
</gene>
<sequence length="528" mass="59254">MNRLKKSHRQKSLFWRPIAPNPRWQKENPTAHGSTDTGGFGYNGGNEEVKTSSTMMNGIHALVNERQNEWLRGYEVDIKSRFDNIESVLKDILAQQSQLNFVSWANQQLFAKLGVSLTEQDWQSGVQLQSQKGFQFLYGKTLFAQFMRMSEDFFVNDPLSGQRKQEAERMFKEAGFHAVGIAPCADGRLAHILSYVLRLPYALARRKAHAGVMFDVSESVRNWVFIEHTRFRDGQPNLADEPTRYLKIAVYHFSKADPTHQGCAAHGSDDHKAAQAALQKLKDFKQAIENRFGCGSTVQTLLLGLNTDDDSMKVHIPNASGEVCLDRYVETEQLYQATMNLPDSEAKQALENAIVTCNQALGSTAPQPELVKLLSWLIGNNFSQIAYVNQYENGCYSDIGHAERFIGIGNGFEEVQLRNLSYYSFLDTVEEGVNDVDVGIKIFKGLNVKKGLPIPIIIRCDYDGRVPGSKDRAEAKALRIEKALHNRYQELSAPGLLQTLPTLRDFTSCKPAERLPGLADLSAKQRTA</sequence>
<feature type="chain" id="PRO_0000452063" description="Carboxysome shell carbonic anhydrase">
    <location>
        <begin position="1"/>
        <end position="528"/>
    </location>
</feature>
<feature type="region of interest" description="Disordered" evidence="2">
    <location>
        <begin position="17"/>
        <end position="47"/>
    </location>
</feature>
<feature type="active site" description="Proton acceptor" evidence="1">
    <location>
        <position position="186"/>
    </location>
</feature>
<feature type="binding site" evidence="1">
    <location>
        <position position="184"/>
    </location>
    <ligand>
        <name>Zn(2+)</name>
        <dbReference type="ChEBI" id="CHEBI:29105"/>
        <note>catalytic</note>
    </ligand>
</feature>
<feature type="binding site" evidence="1">
    <location>
        <position position="252"/>
    </location>
    <ligand>
        <name>Zn(2+)</name>
        <dbReference type="ChEBI" id="CHEBI:29105"/>
        <note>catalytic</note>
    </ligand>
</feature>
<feature type="binding site" evidence="1">
    <location>
        <position position="263"/>
    </location>
    <ligand>
        <name>Zn(2+)</name>
        <dbReference type="ChEBI" id="CHEBI:29105"/>
        <note>catalytic</note>
    </ligand>
</feature>
<organism>
    <name type="scientific">Hydrogenovibrio crunogenus (strain DSM 25203 / XCL-2)</name>
    <name type="common">Thiomicrospira crunogena</name>
    <dbReference type="NCBI Taxonomy" id="317025"/>
    <lineage>
        <taxon>Bacteria</taxon>
        <taxon>Pseudomonadati</taxon>
        <taxon>Pseudomonadota</taxon>
        <taxon>Gammaproteobacteria</taxon>
        <taxon>Thiotrichales</taxon>
        <taxon>Piscirickettsiaceae</taxon>
        <taxon>Hydrogenovibrio</taxon>
    </lineage>
</organism>
<protein>
    <recommendedName>
        <fullName evidence="5">Carboxysome shell carbonic anhydrase</fullName>
        <shortName evidence="5">CsoSCA</shortName>
        <ecNumber evidence="3">4.2.1.1</ecNumber>
    </recommendedName>
    <alternativeName>
        <fullName evidence="5">Carbonic anhydrase</fullName>
        <shortName evidence="6">CA</shortName>
    </alternativeName>
    <alternativeName>
        <fullName evidence="6">Carboxysome shell protein CsoS3</fullName>
    </alternativeName>
</protein>
<accession>Q31HD6</accession>
<proteinExistence type="evidence at protein level"/>
<keyword id="KW-1283">Bacterial microcompartment</keyword>
<keyword id="KW-0120">Carbon dioxide fixation</keyword>
<keyword id="KW-1282">Carboxysome</keyword>
<keyword id="KW-0456">Lyase</keyword>
<keyword id="KW-0479">Metal-binding</keyword>
<keyword id="KW-0862">Zinc</keyword>
<dbReference type="EC" id="4.2.1.1" evidence="3"/>
<dbReference type="EMBL" id="CP000109">
    <property type="protein sequence ID" value="ABB41437.1"/>
    <property type="molecule type" value="Genomic_DNA"/>
</dbReference>
<dbReference type="SMR" id="Q31HD6"/>
<dbReference type="STRING" id="317025.Tcr_0841"/>
<dbReference type="KEGG" id="tcx:Tcr_0841"/>
<dbReference type="eggNOG" id="COG0288">
    <property type="taxonomic scope" value="Bacteria"/>
</dbReference>
<dbReference type="HOGENOM" id="CLU_535194_0_0_6"/>
<dbReference type="GO" id="GO:0031470">
    <property type="term" value="C:carboxysome"/>
    <property type="evidence" value="ECO:0007669"/>
    <property type="project" value="UniProtKB-SubCell"/>
</dbReference>
<dbReference type="GO" id="GO:0004089">
    <property type="term" value="F:carbonate dehydratase activity"/>
    <property type="evidence" value="ECO:0007669"/>
    <property type="project" value="UniProtKB-EC"/>
</dbReference>
<dbReference type="GO" id="GO:0046872">
    <property type="term" value="F:metal ion binding"/>
    <property type="evidence" value="ECO:0007669"/>
    <property type="project" value="UniProtKB-KW"/>
</dbReference>
<dbReference type="GO" id="GO:0015977">
    <property type="term" value="P:carbon fixation"/>
    <property type="evidence" value="ECO:0007669"/>
    <property type="project" value="UniProtKB-KW"/>
</dbReference>
<dbReference type="Gene3D" id="3.30.1330.140">
    <property type="entry name" value="Carboxysome Shell Carbonic Anhydrase, C-terminal domain"/>
    <property type="match status" value="1"/>
</dbReference>
<dbReference type="Gene3D" id="1.20.120.1310">
    <property type="entry name" value="Carboxysome Shell Carbonic Anhydrase, N-terminal helical domain"/>
    <property type="match status" value="1"/>
</dbReference>
<dbReference type="InterPro" id="IPR014074">
    <property type="entry name" value="Carboxysome_shell_carb_anhy"/>
</dbReference>
<dbReference type="InterPro" id="IPR048620">
    <property type="entry name" value="CsoSCA_C"/>
</dbReference>
<dbReference type="InterPro" id="IPR043066">
    <property type="entry name" value="CsoSCA_C_sf"/>
</dbReference>
<dbReference type="InterPro" id="IPR048539">
    <property type="entry name" value="CsoSCA_cat"/>
</dbReference>
<dbReference type="InterPro" id="IPR048619">
    <property type="entry name" value="CsoSCA_N"/>
</dbReference>
<dbReference type="InterPro" id="IPR043065">
    <property type="entry name" value="CsoSCA_N_sf"/>
</dbReference>
<dbReference type="NCBIfam" id="TIGR02701">
    <property type="entry name" value="shell_carb_anhy"/>
    <property type="match status" value="1"/>
</dbReference>
<dbReference type="Pfam" id="PF08936">
    <property type="entry name" value="CsoSCA_C"/>
    <property type="match status" value="1"/>
</dbReference>
<dbReference type="Pfam" id="PF20686">
    <property type="entry name" value="CsoSCA_cat"/>
    <property type="match status" value="1"/>
</dbReference>
<dbReference type="Pfam" id="PF20687">
    <property type="entry name" value="CsoSCA_N"/>
    <property type="match status" value="1"/>
</dbReference>
<evidence type="ECO:0000250" key="1">
    <source>
        <dbReference type="UniProtKB" id="O85042"/>
    </source>
</evidence>
<evidence type="ECO:0000256" key="2">
    <source>
        <dbReference type="SAM" id="MobiDB-lite"/>
    </source>
</evidence>
<evidence type="ECO:0000269" key="3">
    <source>
    </source>
</evidence>
<evidence type="ECO:0000269" key="4">
    <source>
    </source>
</evidence>
<evidence type="ECO:0000303" key="5">
    <source>
    </source>
</evidence>
<evidence type="ECO:0000305" key="6"/>
<evidence type="ECO:0000305" key="7">
    <source>
    </source>
</evidence>
<evidence type="ECO:0000305" key="8">
    <source>
    </source>
</evidence>
<reference key="1">
    <citation type="journal article" date="2006" name="PLoS Biol.">
        <title>The genome of deep-sea vent chemolithoautotroph Thiomicrospira crunogena XCL-2.</title>
        <authorList>
            <person name="Scott K.M."/>
            <person name="Sievert S.M."/>
            <person name="Abril F.N."/>
            <person name="Ball L.A."/>
            <person name="Barrett C.J."/>
            <person name="Blake R.A."/>
            <person name="Boller A.J."/>
            <person name="Chain P.S.G."/>
            <person name="Clark J.A."/>
            <person name="Davis C.R."/>
            <person name="Detter C."/>
            <person name="Do K.F."/>
            <person name="Dobrinski K.P."/>
            <person name="Faza B.I."/>
            <person name="Fitzpatrick K.A."/>
            <person name="Freyermuth S.K."/>
            <person name="Harmer T.L."/>
            <person name="Hauser L.J."/>
            <person name="Huegler M."/>
            <person name="Kerfeld C.A."/>
            <person name="Klotz M.G."/>
            <person name="Kong W.W."/>
            <person name="Land M."/>
            <person name="Lapidus A."/>
            <person name="Larimer F.W."/>
            <person name="Longo D.L."/>
            <person name="Lucas S."/>
            <person name="Malfatti S.A."/>
            <person name="Massey S.E."/>
            <person name="Martin D.D."/>
            <person name="McCuddin Z."/>
            <person name="Meyer F."/>
            <person name="Moore J.L."/>
            <person name="Ocampo L.H. Jr."/>
            <person name="Paul J.H."/>
            <person name="Paulsen I.T."/>
            <person name="Reep D.K."/>
            <person name="Ren Q."/>
            <person name="Ross R.L."/>
            <person name="Sato P.Y."/>
            <person name="Thomas P."/>
            <person name="Tinkham L.E."/>
            <person name="Zeruth G.T."/>
        </authorList>
    </citation>
    <scope>NUCLEOTIDE SEQUENCE [LARGE SCALE GENOMIC DNA]</scope>
    <source>
        <strain>DSM 25203 / XCL-2</strain>
    </source>
</reference>
<reference key="2">
    <citation type="journal article" date="2010" name="Appl. Environ. Microbiol.">
        <title>Expression and function of four carbonic anhydrase homologs in the deep-sea chemolithoautotroph Thiomicrospira crunogena.</title>
        <authorList>
            <person name="Dobrinski K.P."/>
            <person name="Boller A.J."/>
            <person name="Scott K.M."/>
        </authorList>
    </citation>
    <scope>FUNCTION</scope>
    <scope>CATALYTIC ACTIVITY</scope>
    <scope>ACTIVITY REGULATION</scope>
    <scope>SUBCELLULAR LOCATION</scope>
    <source>
        <strain>DSM 25203 / XCL-2</strain>
    </source>
</reference>
<reference key="3">
    <citation type="journal article" date="2017" name="J. Bacteriol.">
        <title>Proteomic and Mutant Analysis of the CO2 Concentrating Mechanism of Hydrothermal Vent Chemolithoautotroph Thiomicrospira crunogena.</title>
        <authorList>
            <consortium name="USF MCB4404L"/>
            <person name="Mangiapia M."/>
            <person name="Brown T.W."/>
            <person name="Chaput D."/>
            <person name="Haller E."/>
            <person name="Harmer T.L."/>
            <person name="Hashemy Z."/>
            <person name="Keeley R."/>
            <person name="Leonard J."/>
            <person name="Mancera P."/>
            <person name="Nicholson D."/>
            <person name="Stevens S."/>
            <person name="Wanjugi P."/>
            <person name="Zabinski T."/>
            <person name="Pan C."/>
            <person name="Scott K.M."/>
        </authorList>
    </citation>
    <scope>SUBCELLULAR LOCATION</scope>
    <scope>INDUCTION</scope>
    <scope>DISRUPTION PHENOTYPE</scope>
    <source>
        <strain>DSM 25203 / XCL-2</strain>
    </source>
</reference>
<name>CSOCA_HYDCU</name>
<comment type="function">
    <text evidence="3 7">Reversible hydration of carbon dioxide. This bacteria encodes at least 3 CA enzymes (PubMed:20400567). Essential for chemolithotrophic carbon dioxide fixation, supplies CO(2) to RuBisCO (ribulose bisphosphate carboxylase, cbbL-cbbS) in the carboxysome (Probable).</text>
</comment>
<comment type="catalytic activity">
    <reaction evidence="3">
        <text>hydrogencarbonate + H(+) = CO2 + H2O</text>
        <dbReference type="Rhea" id="RHEA:10748"/>
        <dbReference type="ChEBI" id="CHEBI:15377"/>
        <dbReference type="ChEBI" id="CHEBI:15378"/>
        <dbReference type="ChEBI" id="CHEBI:16526"/>
        <dbReference type="ChEBI" id="CHEBI:17544"/>
        <dbReference type="EC" id="4.2.1.1"/>
    </reaction>
</comment>
<comment type="cofactor">
    <cofactor evidence="1">
        <name>Zn(2+)</name>
        <dbReference type="ChEBI" id="CHEBI:29105"/>
    </cofactor>
    <text evidence="1">Binds 1 Zn(2+) per monomer.</text>
</comment>
<comment type="activity regulation">
    <text evidence="3">Inhibited by ethoxyzolamide and dithiothreitol (in crude extracts upon expression in E.coli).</text>
</comment>
<comment type="subunit">
    <text evidence="1">Homodimer.</text>
</comment>
<comment type="subcellular location">
    <subcellularLocation>
        <location evidence="7 8">Carboxysome</location>
    </subcellularLocation>
    <text evidence="6">This bacterium makes alpha-type carboxysomes.</text>
</comment>
<comment type="induction">
    <text evidence="4">Induced by growth in low levels of dissolved inorganic carbon (DIC) (at protein level).</text>
</comment>
<comment type="disruption phenotype">
    <text evidence="4">Cells do not grow in low DIC levels. Cells lose carboxysomes when grown under low DIC conditions. Accumulates intracellular DIC normally, poor CO(2) fixation.</text>
</comment>
<comment type="similarity">
    <text evidence="6">Belongs to the beta-class carbonic anhydrase family. CsoSCA subfamily.</text>
</comment>